<feature type="chain" id="PRO_1000192793" description="Phosphoglycerate kinase">
    <location>
        <begin position="1"/>
        <end position="408"/>
    </location>
</feature>
<feature type="binding site" evidence="1">
    <location>
        <begin position="24"/>
        <end position="26"/>
    </location>
    <ligand>
        <name>substrate</name>
    </ligand>
</feature>
<feature type="binding site" evidence="1">
    <location>
        <position position="39"/>
    </location>
    <ligand>
        <name>substrate</name>
    </ligand>
</feature>
<feature type="binding site" evidence="1">
    <location>
        <begin position="62"/>
        <end position="65"/>
    </location>
    <ligand>
        <name>substrate</name>
    </ligand>
</feature>
<feature type="binding site" evidence="1">
    <location>
        <position position="121"/>
    </location>
    <ligand>
        <name>substrate</name>
    </ligand>
</feature>
<feature type="binding site" evidence="1">
    <location>
        <position position="161"/>
    </location>
    <ligand>
        <name>substrate</name>
    </ligand>
</feature>
<feature type="binding site" evidence="1">
    <location>
        <position position="211"/>
    </location>
    <ligand>
        <name>ATP</name>
        <dbReference type="ChEBI" id="CHEBI:30616"/>
    </ligand>
</feature>
<feature type="binding site" evidence="1">
    <location>
        <position position="307"/>
    </location>
    <ligand>
        <name>ATP</name>
        <dbReference type="ChEBI" id="CHEBI:30616"/>
    </ligand>
</feature>
<feature type="binding site" evidence="1">
    <location>
        <position position="338"/>
    </location>
    <ligand>
        <name>ATP</name>
        <dbReference type="ChEBI" id="CHEBI:30616"/>
    </ligand>
</feature>
<feature type="binding site" evidence="1">
    <location>
        <begin position="364"/>
        <end position="367"/>
    </location>
    <ligand>
        <name>ATP</name>
        <dbReference type="ChEBI" id="CHEBI:30616"/>
    </ligand>
</feature>
<evidence type="ECO:0000255" key="1">
    <source>
        <dbReference type="HAMAP-Rule" id="MF_00145"/>
    </source>
</evidence>
<gene>
    <name evidence="1" type="primary">pgk</name>
    <name type="ordered locus">Achl_1829</name>
</gene>
<sequence length="408" mass="42558">MTSHTLNELIAEGVRGRYILVRSDLNVPLDGSTVTDDGRIKASLPVLAKLTDAGARVLVTAHLGRPKGAPEDKYSLRPAVDRLAELAGFKVTLAADTVGDSAREAAASLQDGEALVLENVRFDARETSKDDAERGAFADELVALTGANGAYVDDAFGAVHRKHASVYDVASRLPSYQGDLVHTEVEVLRKLTADTQRPYVVVLGGSKVSDKLAVIDNLIGKADTILVGGGMLFTFLAAAGHKVAASLLEQDQIGVVQDYLKRAADAGTEFVIPTDVVVAEKFAADAAHETVAADAIEASSFGANGIGLDIGPDSAAAFADRIKGARTVFWNGPMGVFEFEAFSAGTRAIAQALTETEAFTVVGGGDSAAAVRTLGFADDQFGHISTGGGASLEYLEGKELPGLSILDR</sequence>
<protein>
    <recommendedName>
        <fullName evidence="1">Phosphoglycerate kinase</fullName>
        <ecNumber evidence="1">2.7.2.3</ecNumber>
    </recommendedName>
</protein>
<accession>B8H7M5</accession>
<name>PGK_PSECP</name>
<organism>
    <name type="scientific">Pseudarthrobacter chlorophenolicus (strain ATCC 700700 / DSM 12829 / CIP 107037 / JCM 12360 / KCTC 9906 / NCIMB 13794 / A6)</name>
    <name type="common">Arthrobacter chlorophenolicus</name>
    <dbReference type="NCBI Taxonomy" id="452863"/>
    <lineage>
        <taxon>Bacteria</taxon>
        <taxon>Bacillati</taxon>
        <taxon>Actinomycetota</taxon>
        <taxon>Actinomycetes</taxon>
        <taxon>Micrococcales</taxon>
        <taxon>Micrococcaceae</taxon>
        <taxon>Pseudarthrobacter</taxon>
    </lineage>
</organism>
<reference key="1">
    <citation type="submission" date="2009-01" db="EMBL/GenBank/DDBJ databases">
        <title>Complete sequence of chromosome of Arthrobacter chlorophenolicus A6.</title>
        <authorList>
            <consortium name="US DOE Joint Genome Institute"/>
            <person name="Lucas S."/>
            <person name="Copeland A."/>
            <person name="Lapidus A."/>
            <person name="Glavina del Rio T."/>
            <person name="Tice H."/>
            <person name="Bruce D."/>
            <person name="Goodwin L."/>
            <person name="Pitluck S."/>
            <person name="Goltsman E."/>
            <person name="Clum A."/>
            <person name="Larimer F."/>
            <person name="Land M."/>
            <person name="Hauser L."/>
            <person name="Kyrpides N."/>
            <person name="Mikhailova N."/>
            <person name="Jansson J."/>
            <person name="Richardson P."/>
        </authorList>
    </citation>
    <scope>NUCLEOTIDE SEQUENCE [LARGE SCALE GENOMIC DNA]</scope>
    <source>
        <strain>ATCC 700700 / DSM 12829 / CIP 107037 / JCM 12360 / KCTC 9906 / NCIMB 13794 / A6</strain>
    </source>
</reference>
<comment type="catalytic activity">
    <reaction evidence="1">
        <text>(2R)-3-phosphoglycerate + ATP = (2R)-3-phospho-glyceroyl phosphate + ADP</text>
        <dbReference type="Rhea" id="RHEA:14801"/>
        <dbReference type="ChEBI" id="CHEBI:30616"/>
        <dbReference type="ChEBI" id="CHEBI:57604"/>
        <dbReference type="ChEBI" id="CHEBI:58272"/>
        <dbReference type="ChEBI" id="CHEBI:456216"/>
        <dbReference type="EC" id="2.7.2.3"/>
    </reaction>
</comment>
<comment type="pathway">
    <text evidence="1">Carbohydrate degradation; glycolysis; pyruvate from D-glyceraldehyde 3-phosphate: step 2/5.</text>
</comment>
<comment type="subunit">
    <text evidence="1">Monomer.</text>
</comment>
<comment type="subcellular location">
    <subcellularLocation>
        <location evidence="1">Cytoplasm</location>
    </subcellularLocation>
</comment>
<comment type="similarity">
    <text evidence="1">Belongs to the phosphoglycerate kinase family.</text>
</comment>
<proteinExistence type="inferred from homology"/>
<keyword id="KW-0067">ATP-binding</keyword>
<keyword id="KW-0963">Cytoplasm</keyword>
<keyword id="KW-0324">Glycolysis</keyword>
<keyword id="KW-0418">Kinase</keyword>
<keyword id="KW-0547">Nucleotide-binding</keyword>
<keyword id="KW-0808">Transferase</keyword>
<dbReference type="EC" id="2.7.2.3" evidence="1"/>
<dbReference type="EMBL" id="CP001341">
    <property type="protein sequence ID" value="ACL39805.1"/>
    <property type="molecule type" value="Genomic_DNA"/>
</dbReference>
<dbReference type="RefSeq" id="WP_015937025.1">
    <property type="nucleotide sequence ID" value="NC_011886.1"/>
</dbReference>
<dbReference type="SMR" id="B8H7M5"/>
<dbReference type="STRING" id="452863.Achl_1829"/>
<dbReference type="KEGG" id="ach:Achl_1829"/>
<dbReference type="eggNOG" id="COG0126">
    <property type="taxonomic scope" value="Bacteria"/>
</dbReference>
<dbReference type="HOGENOM" id="CLU_025427_0_2_11"/>
<dbReference type="OrthoDB" id="9808460at2"/>
<dbReference type="UniPathway" id="UPA00109">
    <property type="reaction ID" value="UER00185"/>
</dbReference>
<dbReference type="Proteomes" id="UP000002505">
    <property type="component" value="Chromosome"/>
</dbReference>
<dbReference type="GO" id="GO:0005829">
    <property type="term" value="C:cytosol"/>
    <property type="evidence" value="ECO:0007669"/>
    <property type="project" value="TreeGrafter"/>
</dbReference>
<dbReference type="GO" id="GO:0043531">
    <property type="term" value="F:ADP binding"/>
    <property type="evidence" value="ECO:0007669"/>
    <property type="project" value="TreeGrafter"/>
</dbReference>
<dbReference type="GO" id="GO:0005524">
    <property type="term" value="F:ATP binding"/>
    <property type="evidence" value="ECO:0007669"/>
    <property type="project" value="UniProtKB-KW"/>
</dbReference>
<dbReference type="GO" id="GO:0004618">
    <property type="term" value="F:phosphoglycerate kinase activity"/>
    <property type="evidence" value="ECO:0007669"/>
    <property type="project" value="UniProtKB-UniRule"/>
</dbReference>
<dbReference type="GO" id="GO:0006094">
    <property type="term" value="P:gluconeogenesis"/>
    <property type="evidence" value="ECO:0007669"/>
    <property type="project" value="TreeGrafter"/>
</dbReference>
<dbReference type="GO" id="GO:0006096">
    <property type="term" value="P:glycolytic process"/>
    <property type="evidence" value="ECO:0007669"/>
    <property type="project" value="UniProtKB-UniRule"/>
</dbReference>
<dbReference type="FunFam" id="3.40.50.1260:FF:000006">
    <property type="entry name" value="Phosphoglycerate kinase"/>
    <property type="match status" value="1"/>
</dbReference>
<dbReference type="FunFam" id="3.40.50.1260:FF:000031">
    <property type="entry name" value="Phosphoglycerate kinase 1"/>
    <property type="match status" value="1"/>
</dbReference>
<dbReference type="Gene3D" id="3.40.50.1260">
    <property type="entry name" value="Phosphoglycerate kinase, N-terminal domain"/>
    <property type="match status" value="2"/>
</dbReference>
<dbReference type="HAMAP" id="MF_00145">
    <property type="entry name" value="Phosphoglyc_kinase"/>
    <property type="match status" value="1"/>
</dbReference>
<dbReference type="InterPro" id="IPR001576">
    <property type="entry name" value="Phosphoglycerate_kinase"/>
</dbReference>
<dbReference type="InterPro" id="IPR015824">
    <property type="entry name" value="Phosphoglycerate_kinase_N"/>
</dbReference>
<dbReference type="InterPro" id="IPR036043">
    <property type="entry name" value="Phosphoglycerate_kinase_sf"/>
</dbReference>
<dbReference type="PANTHER" id="PTHR11406">
    <property type="entry name" value="PHOSPHOGLYCERATE KINASE"/>
    <property type="match status" value="1"/>
</dbReference>
<dbReference type="PANTHER" id="PTHR11406:SF23">
    <property type="entry name" value="PHOSPHOGLYCERATE KINASE 1, CHLOROPLASTIC-RELATED"/>
    <property type="match status" value="1"/>
</dbReference>
<dbReference type="Pfam" id="PF00162">
    <property type="entry name" value="PGK"/>
    <property type="match status" value="1"/>
</dbReference>
<dbReference type="PIRSF" id="PIRSF000724">
    <property type="entry name" value="Pgk"/>
    <property type="match status" value="1"/>
</dbReference>
<dbReference type="PRINTS" id="PR00477">
    <property type="entry name" value="PHGLYCKINASE"/>
</dbReference>
<dbReference type="SUPFAM" id="SSF53748">
    <property type="entry name" value="Phosphoglycerate kinase"/>
    <property type="match status" value="1"/>
</dbReference>